<protein>
    <recommendedName>
        <fullName evidence="1">3-deoxy-manno-octulosonate cytidylyltransferase</fullName>
        <ecNumber evidence="1">2.7.7.38</ecNumber>
    </recommendedName>
    <alternativeName>
        <fullName evidence="1">CMP-2-keto-3-deoxyoctulosonic acid synthase</fullName>
        <shortName evidence="1">CKS</shortName>
        <shortName evidence="1">CMP-KDO synthase</shortName>
    </alternativeName>
</protein>
<evidence type="ECO:0000255" key="1">
    <source>
        <dbReference type="HAMAP-Rule" id="MF_00057"/>
    </source>
</evidence>
<feature type="chain" id="PRO_1000117804" description="3-deoxy-manno-octulosonate cytidylyltransferase">
    <location>
        <begin position="1"/>
        <end position="247"/>
    </location>
</feature>
<reference key="1">
    <citation type="submission" date="2009-01" db="EMBL/GenBank/DDBJ databases">
        <title>Complete sequence of chromosome of Methylobacterium nodulans ORS 2060.</title>
        <authorList>
            <consortium name="US DOE Joint Genome Institute"/>
            <person name="Lucas S."/>
            <person name="Copeland A."/>
            <person name="Lapidus A."/>
            <person name="Glavina del Rio T."/>
            <person name="Dalin E."/>
            <person name="Tice H."/>
            <person name="Bruce D."/>
            <person name="Goodwin L."/>
            <person name="Pitluck S."/>
            <person name="Sims D."/>
            <person name="Brettin T."/>
            <person name="Detter J.C."/>
            <person name="Han C."/>
            <person name="Larimer F."/>
            <person name="Land M."/>
            <person name="Hauser L."/>
            <person name="Kyrpides N."/>
            <person name="Ivanova N."/>
            <person name="Marx C.J."/>
            <person name="Richardson P."/>
        </authorList>
    </citation>
    <scope>NUCLEOTIDE SEQUENCE [LARGE SCALE GENOMIC DNA]</scope>
    <source>
        <strain>LMG 21967 / CNCM I-2342 / ORS 2060</strain>
    </source>
</reference>
<gene>
    <name evidence="1" type="primary">kdsB</name>
    <name type="ordered locus">Mnod_0512</name>
</gene>
<proteinExistence type="inferred from homology"/>
<name>KDSB_METNO</name>
<keyword id="KW-0963">Cytoplasm</keyword>
<keyword id="KW-0448">Lipopolysaccharide biosynthesis</keyword>
<keyword id="KW-0548">Nucleotidyltransferase</keyword>
<keyword id="KW-1185">Reference proteome</keyword>
<keyword id="KW-0808">Transferase</keyword>
<dbReference type="EC" id="2.7.7.38" evidence="1"/>
<dbReference type="EMBL" id="CP001349">
    <property type="protein sequence ID" value="ACL55553.1"/>
    <property type="molecule type" value="Genomic_DNA"/>
</dbReference>
<dbReference type="RefSeq" id="WP_015927263.1">
    <property type="nucleotide sequence ID" value="NC_011894.1"/>
</dbReference>
<dbReference type="SMR" id="B8ICG5"/>
<dbReference type="STRING" id="460265.Mnod_0512"/>
<dbReference type="KEGG" id="mno:Mnod_0512"/>
<dbReference type="eggNOG" id="COG1212">
    <property type="taxonomic scope" value="Bacteria"/>
</dbReference>
<dbReference type="HOGENOM" id="CLU_065038_0_1_5"/>
<dbReference type="OrthoDB" id="9815559at2"/>
<dbReference type="UniPathway" id="UPA00030"/>
<dbReference type="UniPathway" id="UPA00358">
    <property type="reaction ID" value="UER00476"/>
</dbReference>
<dbReference type="Proteomes" id="UP000008207">
    <property type="component" value="Chromosome"/>
</dbReference>
<dbReference type="GO" id="GO:0005829">
    <property type="term" value="C:cytosol"/>
    <property type="evidence" value="ECO:0007669"/>
    <property type="project" value="TreeGrafter"/>
</dbReference>
<dbReference type="GO" id="GO:0008690">
    <property type="term" value="F:3-deoxy-manno-octulosonate cytidylyltransferase activity"/>
    <property type="evidence" value="ECO:0007669"/>
    <property type="project" value="UniProtKB-UniRule"/>
</dbReference>
<dbReference type="GO" id="GO:0033468">
    <property type="term" value="P:CMP-keto-3-deoxy-D-manno-octulosonic acid biosynthetic process"/>
    <property type="evidence" value="ECO:0007669"/>
    <property type="project" value="UniProtKB-UniRule"/>
</dbReference>
<dbReference type="GO" id="GO:0009103">
    <property type="term" value="P:lipopolysaccharide biosynthetic process"/>
    <property type="evidence" value="ECO:0007669"/>
    <property type="project" value="UniProtKB-UniRule"/>
</dbReference>
<dbReference type="CDD" id="cd02517">
    <property type="entry name" value="CMP-KDO-Synthetase"/>
    <property type="match status" value="1"/>
</dbReference>
<dbReference type="Gene3D" id="3.90.550.10">
    <property type="entry name" value="Spore Coat Polysaccharide Biosynthesis Protein SpsA, Chain A"/>
    <property type="match status" value="1"/>
</dbReference>
<dbReference type="HAMAP" id="MF_00057">
    <property type="entry name" value="KdsB"/>
    <property type="match status" value="1"/>
</dbReference>
<dbReference type="InterPro" id="IPR003329">
    <property type="entry name" value="Cytidylyl_trans"/>
</dbReference>
<dbReference type="InterPro" id="IPR004528">
    <property type="entry name" value="KdsB"/>
</dbReference>
<dbReference type="InterPro" id="IPR029044">
    <property type="entry name" value="Nucleotide-diphossugar_trans"/>
</dbReference>
<dbReference type="NCBIfam" id="TIGR00466">
    <property type="entry name" value="kdsB"/>
    <property type="match status" value="1"/>
</dbReference>
<dbReference type="NCBIfam" id="NF003948">
    <property type="entry name" value="PRK05450.1-1"/>
    <property type="match status" value="1"/>
</dbReference>
<dbReference type="NCBIfam" id="NF003952">
    <property type="entry name" value="PRK05450.1-5"/>
    <property type="match status" value="1"/>
</dbReference>
<dbReference type="PANTHER" id="PTHR42866">
    <property type="entry name" value="3-DEOXY-MANNO-OCTULOSONATE CYTIDYLYLTRANSFERASE"/>
    <property type="match status" value="1"/>
</dbReference>
<dbReference type="PANTHER" id="PTHR42866:SF2">
    <property type="entry name" value="3-DEOXY-MANNO-OCTULOSONATE CYTIDYLYLTRANSFERASE, MITOCHONDRIAL"/>
    <property type="match status" value="1"/>
</dbReference>
<dbReference type="Pfam" id="PF02348">
    <property type="entry name" value="CTP_transf_3"/>
    <property type="match status" value="1"/>
</dbReference>
<dbReference type="SUPFAM" id="SSF53448">
    <property type="entry name" value="Nucleotide-diphospho-sugar transferases"/>
    <property type="match status" value="1"/>
</dbReference>
<sequence length="247" mass="26558">MSDPLILIPARLGATRLPDKPLADICGEPMIVHVWRRAIAAGLGPVVVCTDAPTVVAAVEAVGGLAVLTRPDHPSGSDRLAEALGIIDPEGRHDVVVNLQGDLPTIDPGIVAAAVTPLADRAVDIATLCAVITRDEERTEPSVVKLVGSPITPTRLRALYFTRATAPWGEGPLYHHIGLYAYRRRALERFVSLSPSVLERREKLEQLRALEAGMRIDAVVVDDVPLGVDTPHDLDRARAVMAARRLN</sequence>
<organism>
    <name type="scientific">Methylobacterium nodulans (strain LMG 21967 / CNCM I-2342 / ORS 2060)</name>
    <dbReference type="NCBI Taxonomy" id="460265"/>
    <lineage>
        <taxon>Bacteria</taxon>
        <taxon>Pseudomonadati</taxon>
        <taxon>Pseudomonadota</taxon>
        <taxon>Alphaproteobacteria</taxon>
        <taxon>Hyphomicrobiales</taxon>
        <taxon>Methylobacteriaceae</taxon>
        <taxon>Methylobacterium</taxon>
    </lineage>
</organism>
<comment type="function">
    <text evidence="1">Activates KDO (a required 8-carbon sugar) for incorporation into bacterial lipopolysaccharide in Gram-negative bacteria.</text>
</comment>
<comment type="catalytic activity">
    <reaction evidence="1">
        <text>3-deoxy-alpha-D-manno-oct-2-ulosonate + CTP = CMP-3-deoxy-beta-D-manno-octulosonate + diphosphate</text>
        <dbReference type="Rhea" id="RHEA:23448"/>
        <dbReference type="ChEBI" id="CHEBI:33019"/>
        <dbReference type="ChEBI" id="CHEBI:37563"/>
        <dbReference type="ChEBI" id="CHEBI:85986"/>
        <dbReference type="ChEBI" id="CHEBI:85987"/>
        <dbReference type="EC" id="2.7.7.38"/>
    </reaction>
</comment>
<comment type="pathway">
    <text evidence="1">Nucleotide-sugar biosynthesis; CMP-3-deoxy-D-manno-octulosonate biosynthesis; CMP-3-deoxy-D-manno-octulosonate from 3-deoxy-D-manno-octulosonate and CTP: step 1/1.</text>
</comment>
<comment type="pathway">
    <text evidence="1">Bacterial outer membrane biogenesis; lipopolysaccharide biosynthesis.</text>
</comment>
<comment type="subcellular location">
    <subcellularLocation>
        <location evidence="1">Cytoplasm</location>
    </subcellularLocation>
</comment>
<comment type="similarity">
    <text evidence="1">Belongs to the KdsB family.</text>
</comment>
<accession>B8ICG5</accession>